<evidence type="ECO:0000250" key="1"/>
<evidence type="ECO:0000255" key="2">
    <source>
        <dbReference type="PROSITE-ProRule" id="PRU00711"/>
    </source>
</evidence>
<sequence>MAYTITSQCISCKLCSSVCPTGAIKVAEDGQHWIDQALCTNCVDSVHTVPQCKAGCPTCDGCVKVPSDYWEGWFANYNRVIAKLTKKQDYWERWFNCYSQKFSEQIQKHQGEILGV</sequence>
<accession>P0A3D5</accession>
<accession>Q57383</accession>
<name>FDXN_TRIAZ</name>
<dbReference type="EMBL" id="L34879">
    <property type="protein sequence ID" value="AAA87248.1"/>
    <property type="molecule type" value="Genomic_DNA"/>
</dbReference>
<dbReference type="GO" id="GO:0051539">
    <property type="term" value="F:4 iron, 4 sulfur cluster binding"/>
    <property type="evidence" value="ECO:0007669"/>
    <property type="project" value="UniProtKB-KW"/>
</dbReference>
<dbReference type="GO" id="GO:0046872">
    <property type="term" value="F:metal ion binding"/>
    <property type="evidence" value="ECO:0007669"/>
    <property type="project" value="UniProtKB-KW"/>
</dbReference>
<dbReference type="GO" id="GO:0009399">
    <property type="term" value="P:nitrogen fixation"/>
    <property type="evidence" value="ECO:0007669"/>
    <property type="project" value="UniProtKB-KW"/>
</dbReference>
<dbReference type="Gene3D" id="3.30.70.20">
    <property type="match status" value="1"/>
</dbReference>
<dbReference type="InterPro" id="IPR017896">
    <property type="entry name" value="4Fe4S_Fe-S-bd"/>
</dbReference>
<dbReference type="InterPro" id="IPR017900">
    <property type="entry name" value="4Fe4S_Fe_S_CS"/>
</dbReference>
<dbReference type="Pfam" id="PF00037">
    <property type="entry name" value="Fer4"/>
    <property type="match status" value="1"/>
</dbReference>
<dbReference type="SUPFAM" id="SSF54862">
    <property type="entry name" value="4Fe-4S ferredoxins"/>
    <property type="match status" value="1"/>
</dbReference>
<dbReference type="PROSITE" id="PS00198">
    <property type="entry name" value="4FE4S_FER_1"/>
    <property type="match status" value="1"/>
</dbReference>
<dbReference type="PROSITE" id="PS51379">
    <property type="entry name" value="4FE4S_FER_2"/>
    <property type="match status" value="1"/>
</dbReference>
<organism>
    <name type="scientific">Trichormus azollae</name>
    <name type="common">Anabaena azollae</name>
    <dbReference type="NCBI Taxonomy" id="1164"/>
    <lineage>
        <taxon>Bacteria</taxon>
        <taxon>Bacillati</taxon>
        <taxon>Cyanobacteriota</taxon>
        <taxon>Cyanophyceae</taxon>
        <taxon>Nostocales</taxon>
        <taxon>Nostocaceae</taxon>
        <taxon>Trichormus</taxon>
    </lineage>
</organism>
<reference key="1">
    <citation type="journal article" date="1995" name="Microbiology">
        <title>Characterization of a nitrogen-fixation (nif) gene cluster from Anabaena azollae 1a shows that closely related cyanobacteria have highly variable but structured intergenic regions.</title>
        <authorList>
            <person name="Jackman D.M."/>
            <person name="Mulligan M.E."/>
        </authorList>
    </citation>
    <scope>NUCLEOTIDE SEQUENCE [GENOMIC DNA]</scope>
    <source>
        <strain>1a</strain>
    </source>
</reference>
<gene>
    <name type="primary">fdxN</name>
</gene>
<feature type="chain" id="PRO_0000159161" description="Ferredoxin-like protein in nif region">
    <location>
        <begin position="1"/>
        <end position="116"/>
    </location>
</feature>
<feature type="domain" description="4Fe-4S ferredoxin-type" evidence="2">
    <location>
        <begin position="2"/>
        <end position="29"/>
    </location>
</feature>
<feature type="binding site" evidence="1">
    <location>
        <position position="9"/>
    </location>
    <ligand>
        <name>iron-sulfur cluster</name>
        <dbReference type="ChEBI" id="CHEBI:30408"/>
    </ligand>
</feature>
<feature type="binding site" evidence="1">
    <location>
        <position position="12"/>
    </location>
    <ligand>
        <name>iron-sulfur cluster</name>
        <dbReference type="ChEBI" id="CHEBI:30408"/>
    </ligand>
</feature>
<feature type="binding site" evidence="1">
    <location>
        <position position="15"/>
    </location>
    <ligand>
        <name>iron-sulfur cluster</name>
        <dbReference type="ChEBI" id="CHEBI:30408"/>
    </ligand>
</feature>
<feature type="binding site" evidence="1">
    <location>
        <position position="19"/>
    </location>
    <ligand>
        <name>iron-sulfur cluster</name>
        <dbReference type="ChEBI" id="CHEBI:30408"/>
    </ligand>
</feature>
<protein>
    <recommendedName>
        <fullName>Ferredoxin-like protein in nif region</fullName>
    </recommendedName>
</protein>
<keyword id="KW-0004">4Fe-4S</keyword>
<keyword id="KW-0249">Electron transport</keyword>
<keyword id="KW-0408">Iron</keyword>
<keyword id="KW-0411">Iron-sulfur</keyword>
<keyword id="KW-0479">Metal-binding</keyword>
<keyword id="KW-0535">Nitrogen fixation</keyword>
<keyword id="KW-0813">Transport</keyword>
<proteinExistence type="predicted"/>